<reference key="1">
    <citation type="journal article" date="2004" name="Syst. Bot.">
        <title>Molecular phylogenetics of core Brassicales, placement of orphan genera, Emblingia, Forchhammeria, Tirania, and character evolution.</title>
        <authorList>
            <person name="Hall J.C."/>
            <person name="Iltis H.H."/>
            <person name="Sytsma K.J."/>
        </authorList>
        <dbReference type="AGRICOLA" id="IND43653588"/>
    </citation>
    <scope>NUCLEOTIDE SEQUENCE [GENOMIC DNA]</scope>
</reference>
<sequence length="504" mass="60416">MEEFQGYLEFDGARQHNFLYPFFFRESIYVLAYDHGLNRLNRNRSIFLENAGYDTKYSSLIVKRLIFRIYEQNHLIISTNDFSQNPFFGHTNHFYYQTISALFAVIVEIPFSLRLVSSFGGKQLAKSYNLQSIHSIFPFLEDKLSHLNYVLDVLIPYPIHLEILVQTLRYRVKDASSLHLLRFCLYEYWNWKNFYTQKKSILNTKFFLFLYNCHVCEYESIFFFLRKRSSHLRSTSSGVLFERIFFYRKIEHLLKVFVNNFQDILGLFKDPFIHYVRYHGKCILAAKDTPLLMNKWKYYFVNLWQWHFSVWFQWQKVHINKLSKDNLDFLGYLSSLRLNPLVVRSQMLENSFLIDNVRKEFDTKIPICSIIGSFAKEKFCNVLGYPISKSTWMDSSDSDILDRFVRICRNLSHYHSGSSKKKNLYRIKYILRLSCVKTLARKHKSTVRAFLKRLGSVLLEEFLTGEEQVLSLIFSRGYSPSQRFYRVRIWYLDIIYLNDLVNHE</sequence>
<organism>
    <name type="scientific">Cynophalla hastata</name>
    <name type="common">Broadleaf caper</name>
    <name type="synonym">Capparis hastata</name>
    <dbReference type="NCBI Taxonomy" id="1465296"/>
    <lineage>
        <taxon>Eukaryota</taxon>
        <taxon>Viridiplantae</taxon>
        <taxon>Streptophyta</taxon>
        <taxon>Embryophyta</taxon>
        <taxon>Tracheophyta</taxon>
        <taxon>Spermatophyta</taxon>
        <taxon>Magnoliopsida</taxon>
        <taxon>eudicotyledons</taxon>
        <taxon>Gunneridae</taxon>
        <taxon>Pentapetalae</taxon>
        <taxon>rosids</taxon>
        <taxon>malvids</taxon>
        <taxon>Brassicales</taxon>
        <taxon>Capparaceae</taxon>
        <taxon>Cynophalla</taxon>
    </lineage>
</organism>
<protein>
    <recommendedName>
        <fullName evidence="1">Maturase K</fullName>
    </recommendedName>
    <alternativeName>
        <fullName evidence="1">Intron maturase</fullName>
    </alternativeName>
</protein>
<proteinExistence type="inferred from homology"/>
<evidence type="ECO:0000255" key="1">
    <source>
        <dbReference type="HAMAP-Rule" id="MF_01390"/>
    </source>
</evidence>
<geneLocation type="chloroplast"/>
<dbReference type="EMBL" id="AY483228">
    <property type="protein sequence ID" value="AAS77363.1"/>
    <property type="molecule type" value="Genomic_DNA"/>
</dbReference>
<dbReference type="GO" id="GO:0009507">
    <property type="term" value="C:chloroplast"/>
    <property type="evidence" value="ECO:0007669"/>
    <property type="project" value="UniProtKB-SubCell"/>
</dbReference>
<dbReference type="GO" id="GO:0003723">
    <property type="term" value="F:RNA binding"/>
    <property type="evidence" value="ECO:0007669"/>
    <property type="project" value="UniProtKB-KW"/>
</dbReference>
<dbReference type="GO" id="GO:0006397">
    <property type="term" value="P:mRNA processing"/>
    <property type="evidence" value="ECO:0007669"/>
    <property type="project" value="UniProtKB-KW"/>
</dbReference>
<dbReference type="GO" id="GO:0008380">
    <property type="term" value="P:RNA splicing"/>
    <property type="evidence" value="ECO:0007669"/>
    <property type="project" value="UniProtKB-UniRule"/>
</dbReference>
<dbReference type="GO" id="GO:0008033">
    <property type="term" value="P:tRNA processing"/>
    <property type="evidence" value="ECO:0007669"/>
    <property type="project" value="UniProtKB-KW"/>
</dbReference>
<dbReference type="HAMAP" id="MF_01390">
    <property type="entry name" value="MatK"/>
    <property type="match status" value="1"/>
</dbReference>
<dbReference type="InterPro" id="IPR024937">
    <property type="entry name" value="Domain_X"/>
</dbReference>
<dbReference type="InterPro" id="IPR002866">
    <property type="entry name" value="Maturase_MatK"/>
</dbReference>
<dbReference type="InterPro" id="IPR024942">
    <property type="entry name" value="Maturase_MatK_N"/>
</dbReference>
<dbReference type="PANTHER" id="PTHR34811">
    <property type="entry name" value="MATURASE K"/>
    <property type="match status" value="1"/>
</dbReference>
<dbReference type="PANTHER" id="PTHR34811:SF1">
    <property type="entry name" value="MATURASE K"/>
    <property type="match status" value="1"/>
</dbReference>
<dbReference type="Pfam" id="PF01348">
    <property type="entry name" value="Intron_maturas2"/>
    <property type="match status" value="1"/>
</dbReference>
<dbReference type="Pfam" id="PF01824">
    <property type="entry name" value="MatK_N"/>
    <property type="match status" value="1"/>
</dbReference>
<accession>Q5VH41</accession>
<keyword id="KW-0150">Chloroplast</keyword>
<keyword id="KW-0507">mRNA processing</keyword>
<keyword id="KW-0934">Plastid</keyword>
<keyword id="KW-0694">RNA-binding</keyword>
<keyword id="KW-0819">tRNA processing</keyword>
<feature type="chain" id="PRO_0000143308" description="Maturase K">
    <location>
        <begin position="1"/>
        <end position="504"/>
    </location>
</feature>
<comment type="function">
    <text evidence="1">Usually encoded in the trnK tRNA gene intron. Probably assists in splicing its own and other chloroplast group II introns.</text>
</comment>
<comment type="subcellular location">
    <subcellularLocation>
        <location>Plastid</location>
        <location>Chloroplast</location>
    </subcellularLocation>
</comment>
<comment type="similarity">
    <text evidence="1">Belongs to the intron maturase 2 family. MatK subfamily.</text>
</comment>
<gene>
    <name evidence="1" type="primary">matK</name>
</gene>
<name>MATK_CYNHA</name>